<comment type="function">
    <text evidence="1">Antagonist of L-type calcium channels (Cav1/CACNA1).</text>
</comment>
<comment type="subcellular location">
    <subcellularLocation>
        <location evidence="3">Secreted</location>
    </subcellularLocation>
</comment>
<comment type="tissue specificity">
    <text evidence="3">Expressed by the venom gland.</text>
</comment>
<comment type="domain">
    <text evidence="2">The presence of a 'disulfide through disulfide knot' structurally defines this protein as a knottin.</text>
</comment>
<comment type="mass spectrometry"/>
<comment type="similarity">
    <text>Belongs to the neurotoxin 02 (plectoxin) family. 09 subfamily.</text>
</comment>
<proteinExistence type="evidence at protein level"/>
<protein>
    <recommendedName>
        <fullName>U6-ctenitoxin-Co1a</fullName>
        <shortName>U6-CNTX-Co1a</shortName>
    </recommendedName>
    <alternativeName>
        <fullName>Neurotoxin Oc F35-5</fullName>
    </alternativeName>
</protein>
<accession>P85267</accession>
<reference evidence="4" key="1">
    <citation type="submission" date="2007-07" db="UniProtKB">
        <authorList>
            <person name="Borges M.H."/>
            <person name="Oliveira C.F.B."/>
            <person name="Goncalves J.M."/>
            <person name="Rates B."/>
            <person name="Santos D.M."/>
            <person name="Pimenta A.M.C."/>
            <person name="Cordeiro M.N."/>
            <person name="Richardson M."/>
        </authorList>
    </citation>
    <scope>PROTEIN SEQUENCE</scope>
    <scope>SUBCELLULAR LOCATION</scope>
    <scope>TISSUE SPECIFICITY</scope>
    <scope>MASS SPECTROMETRY</scope>
    <source>
        <tissue>Venom</tissue>
    </source>
</reference>
<feature type="chain" id="PRO_0000302119" description="U6-ctenitoxin-Co1a">
    <location>
        <begin position="1"/>
        <end position="31" status="greater than"/>
    </location>
</feature>
<feature type="disulfide bond" evidence="2">
    <location>
        <begin position="2"/>
        <end position="18"/>
    </location>
</feature>
<feature type="disulfide bond" evidence="2">
    <location>
        <begin position="9"/>
        <end position="23"/>
    </location>
</feature>
<feature type="disulfide bond" evidence="2">
    <location>
        <begin position="17"/>
        <end status="unknown"/>
    </location>
</feature>
<feature type="disulfide bond" evidence="2">
    <location>
        <begin position="25"/>
        <end status="unknown"/>
    </location>
</feature>
<feature type="non-terminal residue">
    <location>
        <position position="31"/>
    </location>
</feature>
<name>TX29A_CTEON</name>
<dbReference type="SMR" id="P85267"/>
<dbReference type="ArachnoServer" id="AS000314">
    <property type="toxin name" value="U6-ctenitoxin-Co1a"/>
</dbReference>
<dbReference type="GO" id="GO:0005576">
    <property type="term" value="C:extracellular region"/>
    <property type="evidence" value="ECO:0007669"/>
    <property type="project" value="UniProtKB-SubCell"/>
</dbReference>
<dbReference type="GO" id="GO:0005246">
    <property type="term" value="F:calcium channel regulator activity"/>
    <property type="evidence" value="ECO:0007669"/>
    <property type="project" value="UniProtKB-KW"/>
</dbReference>
<dbReference type="GO" id="GO:0090729">
    <property type="term" value="F:toxin activity"/>
    <property type="evidence" value="ECO:0007669"/>
    <property type="project" value="UniProtKB-KW"/>
</dbReference>
<sequence>GCVGHRKSCEHDKKNGCCYFMTCNCWHPMGQ</sequence>
<evidence type="ECO:0000250" key="1"/>
<evidence type="ECO:0000250" key="2">
    <source>
        <dbReference type="UniProtKB" id="P81791"/>
    </source>
</evidence>
<evidence type="ECO:0000269" key="3">
    <source ref="1"/>
</evidence>
<evidence type="ECO:0000305" key="4"/>
<organism>
    <name type="scientific">Ctenus ornatus</name>
    <name type="common">Brazilian spider</name>
    <name type="synonym">Oligoctenus ornatus</name>
    <dbReference type="NCBI Taxonomy" id="406443"/>
    <lineage>
        <taxon>Eukaryota</taxon>
        <taxon>Metazoa</taxon>
        <taxon>Ecdysozoa</taxon>
        <taxon>Arthropoda</taxon>
        <taxon>Chelicerata</taxon>
        <taxon>Arachnida</taxon>
        <taxon>Araneae</taxon>
        <taxon>Araneomorphae</taxon>
        <taxon>Entelegynae</taxon>
        <taxon>Lycosoidea</taxon>
        <taxon>Ctenidae</taxon>
        <taxon>Oligoctenus</taxon>
    </lineage>
</organism>
<keyword id="KW-0108">Calcium channel impairing toxin</keyword>
<keyword id="KW-0903">Direct protein sequencing</keyword>
<keyword id="KW-1015">Disulfide bond</keyword>
<keyword id="KW-0872">Ion channel impairing toxin</keyword>
<keyword id="KW-0960">Knottin</keyword>
<keyword id="KW-0528">Neurotoxin</keyword>
<keyword id="KW-0964">Secreted</keyword>
<keyword id="KW-0800">Toxin</keyword>
<keyword id="KW-1218">Voltage-gated calcium channel impairing toxin</keyword>